<protein>
    <recommendedName>
        <fullName evidence="1">Regulatory protein ViaA</fullName>
    </recommendedName>
    <alternativeName>
        <fullName evidence="1">VWA interacting with AAA+ ATPase</fullName>
    </alternativeName>
</protein>
<comment type="function">
    <text evidence="1">Component of the RavA-ViaA chaperone complex, which may act on the membrane to optimize the function of some of the respiratory chains. ViaA stimulates the ATPase activity of RavA.</text>
</comment>
<comment type="subunit">
    <text evidence="1">Homodimer. Interacts with RavA.</text>
</comment>
<comment type="subcellular location">
    <subcellularLocation>
        <location evidence="1">Cytoplasm</location>
    </subcellularLocation>
</comment>
<comment type="similarity">
    <text evidence="1">Belongs to the ViaA family.</text>
</comment>
<organism>
    <name type="scientific">Escherichia coli O1:K1 / APEC</name>
    <dbReference type="NCBI Taxonomy" id="405955"/>
    <lineage>
        <taxon>Bacteria</taxon>
        <taxon>Pseudomonadati</taxon>
        <taxon>Pseudomonadota</taxon>
        <taxon>Gammaproteobacteria</taxon>
        <taxon>Enterobacterales</taxon>
        <taxon>Enterobacteriaceae</taxon>
        <taxon>Escherichia</taxon>
    </lineage>
</organism>
<accession>A1AHS5</accession>
<keyword id="KW-0143">Chaperone</keyword>
<keyword id="KW-0963">Cytoplasm</keyword>
<keyword id="KW-1185">Reference proteome</keyword>
<reference key="1">
    <citation type="journal article" date="2007" name="J. Bacteriol.">
        <title>The genome sequence of avian pathogenic Escherichia coli strain O1:K1:H7 shares strong similarities with human extraintestinal pathogenic E. coli genomes.</title>
        <authorList>
            <person name="Johnson T.J."/>
            <person name="Kariyawasam S."/>
            <person name="Wannemuehler Y."/>
            <person name="Mangiamele P."/>
            <person name="Johnson S.J."/>
            <person name="Doetkott C."/>
            <person name="Skyberg J.A."/>
            <person name="Lynne A.M."/>
            <person name="Johnson J.R."/>
            <person name="Nolan L.K."/>
        </authorList>
    </citation>
    <scope>NUCLEOTIDE SEQUENCE [LARGE SCALE GENOMIC DNA]</scope>
</reference>
<dbReference type="EMBL" id="CP000468">
    <property type="protein sequence ID" value="ABJ03215.1"/>
    <property type="molecule type" value="Genomic_DNA"/>
</dbReference>
<dbReference type="RefSeq" id="WP_000956636.1">
    <property type="nucleotide sequence ID" value="NZ_CADILS010000011.1"/>
</dbReference>
<dbReference type="SMR" id="A1AHS5"/>
<dbReference type="KEGG" id="ecv:APECO1_2718"/>
<dbReference type="HOGENOM" id="CLU_022130_0_0_6"/>
<dbReference type="Proteomes" id="UP000008216">
    <property type="component" value="Chromosome"/>
</dbReference>
<dbReference type="GO" id="GO:0005829">
    <property type="term" value="C:cytosol"/>
    <property type="evidence" value="ECO:0007669"/>
    <property type="project" value="TreeGrafter"/>
</dbReference>
<dbReference type="CDD" id="cd01462">
    <property type="entry name" value="VWA_YIEM_type"/>
    <property type="match status" value="1"/>
</dbReference>
<dbReference type="Gene3D" id="3.40.50.410">
    <property type="entry name" value="von Willebrand factor, type A domain"/>
    <property type="match status" value="1"/>
</dbReference>
<dbReference type="HAMAP" id="MF_01626">
    <property type="entry name" value="ViaA"/>
    <property type="match status" value="1"/>
</dbReference>
<dbReference type="InterPro" id="IPR008912">
    <property type="entry name" value="Uncharacterised_CoxE"/>
</dbReference>
<dbReference type="InterPro" id="IPR023481">
    <property type="entry name" value="Uncharacterised_ViaA"/>
</dbReference>
<dbReference type="InterPro" id="IPR002035">
    <property type="entry name" value="VWF_A"/>
</dbReference>
<dbReference type="InterPro" id="IPR036465">
    <property type="entry name" value="vWFA_dom_sf"/>
</dbReference>
<dbReference type="NCBIfam" id="NF008230">
    <property type="entry name" value="PRK10997.1"/>
    <property type="match status" value="1"/>
</dbReference>
<dbReference type="PANTHER" id="PTHR36846">
    <property type="entry name" value="PROTEIN VIAA"/>
    <property type="match status" value="1"/>
</dbReference>
<dbReference type="PANTHER" id="PTHR36846:SF1">
    <property type="entry name" value="PROTEIN VIAA"/>
    <property type="match status" value="1"/>
</dbReference>
<dbReference type="Pfam" id="PF05762">
    <property type="entry name" value="VWA_CoxE"/>
    <property type="match status" value="1"/>
</dbReference>
<dbReference type="SMART" id="SM00327">
    <property type="entry name" value="VWA"/>
    <property type="match status" value="1"/>
</dbReference>
<dbReference type="SUPFAM" id="SSF53300">
    <property type="entry name" value="vWA-like"/>
    <property type="match status" value="1"/>
</dbReference>
<sequence>MLTLDTLNVMLAVSEEGLIEEMIIALLASPQLAVFFEKFPRLKAAITDDVPRWREALRSRLKDARVPPELTEEVMCYQQSQLLSTPQFIVQLPQILDLLHRLNSPWAEQARQLVDANSTITSALHTLFLQRWRLSLIVQATTLNQQLLEEEREQLLSEVQERMTLSGQLEPILADNNTAAGRLWDMSAGQLKRGDYQLIVKYGEFLNEQPELKRLAEQLGRSREAKSIPRNDAQMETFRTMVREPATVPEQVDGLQQSDDILRLLPPELATLGITELEYEFYRRLVEKQLLTYRLHGESWREKMIERPVVHKDYDEQPRGPFIVCVDTSGSMGGFNEQCAKAFCLALMRIALAENRRCYIMLFSTEIVRYELSGPQGIEQAIRFLSQQFRGGTDLASCFRAIMERLQSREWFDADAVVISDFIAQRLPDDVTSKVKELQRVHQHRFHAVAMSAHGKPGIMRIFDHIWRFDTGMRSRLLRRWRR</sequence>
<name>VIAA_ECOK1</name>
<feature type="chain" id="PRO_1000069607" description="Regulatory protein ViaA">
    <location>
        <begin position="1"/>
        <end position="483"/>
    </location>
</feature>
<proteinExistence type="inferred from homology"/>
<evidence type="ECO:0000255" key="1">
    <source>
        <dbReference type="HAMAP-Rule" id="MF_01626"/>
    </source>
</evidence>
<gene>
    <name evidence="1" type="primary">viaA</name>
    <name type="ordered locus">Ecok1_37210</name>
    <name type="ORF">APECO1_2718</name>
</gene>